<accession>Q21K29</accession>
<comment type="function">
    <text evidence="1">Functions in the N-end rule pathway of protein degradation where it conjugates Leu from its aminoacyl-tRNA to the N-termini of proteins containing an N-terminal aspartate or glutamate.</text>
</comment>
<comment type="catalytic activity">
    <reaction evidence="1">
        <text>N-terminal L-glutamyl-[protein] + L-leucyl-tRNA(Leu) = N-terminal L-leucyl-L-glutamyl-[protein] + tRNA(Leu) + H(+)</text>
        <dbReference type="Rhea" id="RHEA:50412"/>
        <dbReference type="Rhea" id="RHEA-COMP:9613"/>
        <dbReference type="Rhea" id="RHEA-COMP:9622"/>
        <dbReference type="Rhea" id="RHEA-COMP:12664"/>
        <dbReference type="Rhea" id="RHEA-COMP:12668"/>
        <dbReference type="ChEBI" id="CHEBI:15378"/>
        <dbReference type="ChEBI" id="CHEBI:64721"/>
        <dbReference type="ChEBI" id="CHEBI:78442"/>
        <dbReference type="ChEBI" id="CHEBI:78494"/>
        <dbReference type="ChEBI" id="CHEBI:133041"/>
        <dbReference type="EC" id="2.3.2.29"/>
    </reaction>
</comment>
<comment type="catalytic activity">
    <reaction evidence="1">
        <text>N-terminal L-aspartyl-[protein] + L-leucyl-tRNA(Leu) = N-terminal L-leucyl-L-aspartyl-[protein] + tRNA(Leu) + H(+)</text>
        <dbReference type="Rhea" id="RHEA:50420"/>
        <dbReference type="Rhea" id="RHEA-COMP:9613"/>
        <dbReference type="Rhea" id="RHEA-COMP:9622"/>
        <dbReference type="Rhea" id="RHEA-COMP:12669"/>
        <dbReference type="Rhea" id="RHEA-COMP:12674"/>
        <dbReference type="ChEBI" id="CHEBI:15378"/>
        <dbReference type="ChEBI" id="CHEBI:64720"/>
        <dbReference type="ChEBI" id="CHEBI:78442"/>
        <dbReference type="ChEBI" id="CHEBI:78494"/>
        <dbReference type="ChEBI" id="CHEBI:133042"/>
        <dbReference type="EC" id="2.3.2.29"/>
    </reaction>
</comment>
<comment type="subcellular location">
    <subcellularLocation>
        <location evidence="1">Cytoplasm</location>
    </subcellularLocation>
</comment>
<comment type="similarity">
    <text evidence="1">Belongs to the R-transferase family. Bpt subfamily.</text>
</comment>
<gene>
    <name evidence="1" type="primary">bpt</name>
    <name type="ordered locus">Sde_1690</name>
</gene>
<proteinExistence type="inferred from homology"/>
<organism>
    <name type="scientific">Saccharophagus degradans (strain 2-40 / ATCC 43961 / DSM 17024)</name>
    <dbReference type="NCBI Taxonomy" id="203122"/>
    <lineage>
        <taxon>Bacteria</taxon>
        <taxon>Pseudomonadati</taxon>
        <taxon>Pseudomonadota</taxon>
        <taxon>Gammaproteobacteria</taxon>
        <taxon>Cellvibrionales</taxon>
        <taxon>Cellvibrionaceae</taxon>
        <taxon>Saccharophagus</taxon>
    </lineage>
</organism>
<evidence type="ECO:0000255" key="1">
    <source>
        <dbReference type="HAMAP-Rule" id="MF_00689"/>
    </source>
</evidence>
<feature type="chain" id="PRO_0000263215" description="Aspartate/glutamate leucyltransferase">
    <location>
        <begin position="1"/>
        <end position="236"/>
    </location>
</feature>
<reference key="1">
    <citation type="journal article" date="2008" name="PLoS Genet.">
        <title>Complete genome sequence of the complex carbohydrate-degrading marine bacterium, Saccharophagus degradans strain 2-40 T.</title>
        <authorList>
            <person name="Weiner R.M."/>
            <person name="Taylor L.E. II"/>
            <person name="Henrissat B."/>
            <person name="Hauser L."/>
            <person name="Land M."/>
            <person name="Coutinho P.M."/>
            <person name="Rancurel C."/>
            <person name="Saunders E.H."/>
            <person name="Longmire A.G."/>
            <person name="Zhang H."/>
            <person name="Bayer E.A."/>
            <person name="Gilbert H.J."/>
            <person name="Larimer F."/>
            <person name="Zhulin I.B."/>
            <person name="Ekborg N.A."/>
            <person name="Lamed R."/>
            <person name="Richardson P.M."/>
            <person name="Borovok I."/>
            <person name="Hutcheson S."/>
        </authorList>
    </citation>
    <scope>NUCLEOTIDE SEQUENCE [LARGE SCALE GENOMIC DNA]</scope>
    <source>
        <strain>2-40 / ATCC 43961 / DSM 17024</strain>
    </source>
</reference>
<protein>
    <recommendedName>
        <fullName evidence="1">Aspartate/glutamate leucyltransferase</fullName>
        <ecNumber evidence="1">2.3.2.29</ecNumber>
    </recommendedName>
</protein>
<keyword id="KW-0012">Acyltransferase</keyword>
<keyword id="KW-0963">Cytoplasm</keyword>
<keyword id="KW-1185">Reference proteome</keyword>
<keyword id="KW-0808">Transferase</keyword>
<name>BPT_SACD2</name>
<sequence length="236" mass="27694">MTDLNELKLFATTPHPCSYLDDRDATTVFIDPEVSVDQNLYSQLTNYGFRRSGKHIYRPACKTCQACIPIRVDVETFTPNRSQQRCLRKNKDLTVTVVSTIDTDEHYTLYAKYIERRHSDGDMYPPKRDEYRSFLSAQWGVTKYLEFRNSENSLIGVAVADQLKNGISAVYTFFDPNEQKRSLGVYAVLAQIEWAQKQSNRYVYLGYWIKECQKMSYKTLYKPFELFINNQWLTFI</sequence>
<dbReference type="EC" id="2.3.2.29" evidence="1"/>
<dbReference type="EMBL" id="CP000282">
    <property type="protein sequence ID" value="ABD80950.1"/>
    <property type="molecule type" value="Genomic_DNA"/>
</dbReference>
<dbReference type="RefSeq" id="WP_011468170.1">
    <property type="nucleotide sequence ID" value="NC_007912.1"/>
</dbReference>
<dbReference type="SMR" id="Q21K29"/>
<dbReference type="STRING" id="203122.Sde_1690"/>
<dbReference type="GeneID" id="98613365"/>
<dbReference type="KEGG" id="sde:Sde_1690"/>
<dbReference type="eggNOG" id="COG2935">
    <property type="taxonomic scope" value="Bacteria"/>
</dbReference>
<dbReference type="HOGENOM" id="CLU_077607_0_0_6"/>
<dbReference type="OrthoDB" id="9782022at2"/>
<dbReference type="Proteomes" id="UP000001947">
    <property type="component" value="Chromosome"/>
</dbReference>
<dbReference type="GO" id="GO:0005737">
    <property type="term" value="C:cytoplasm"/>
    <property type="evidence" value="ECO:0007669"/>
    <property type="project" value="UniProtKB-SubCell"/>
</dbReference>
<dbReference type="GO" id="GO:0004057">
    <property type="term" value="F:arginyl-tRNA--protein transferase activity"/>
    <property type="evidence" value="ECO:0007669"/>
    <property type="project" value="InterPro"/>
</dbReference>
<dbReference type="GO" id="GO:0008914">
    <property type="term" value="F:leucyl-tRNA--protein transferase activity"/>
    <property type="evidence" value="ECO:0007669"/>
    <property type="project" value="UniProtKB-UniRule"/>
</dbReference>
<dbReference type="GO" id="GO:0071596">
    <property type="term" value="P:ubiquitin-dependent protein catabolic process via the N-end rule pathway"/>
    <property type="evidence" value="ECO:0007669"/>
    <property type="project" value="InterPro"/>
</dbReference>
<dbReference type="HAMAP" id="MF_00689">
    <property type="entry name" value="Bpt"/>
    <property type="match status" value="1"/>
</dbReference>
<dbReference type="InterPro" id="IPR016181">
    <property type="entry name" value="Acyl_CoA_acyltransferase"/>
</dbReference>
<dbReference type="InterPro" id="IPR017138">
    <property type="entry name" value="Asp_Glu_LeuTrfase"/>
</dbReference>
<dbReference type="InterPro" id="IPR030700">
    <property type="entry name" value="N-end_Aminoacyl_Trfase"/>
</dbReference>
<dbReference type="InterPro" id="IPR007472">
    <property type="entry name" value="N-end_Aminoacyl_Trfase_C"/>
</dbReference>
<dbReference type="InterPro" id="IPR007471">
    <property type="entry name" value="N-end_Aminoacyl_Trfase_N"/>
</dbReference>
<dbReference type="NCBIfam" id="NF002341">
    <property type="entry name" value="PRK01305.1-1"/>
    <property type="match status" value="1"/>
</dbReference>
<dbReference type="NCBIfam" id="NF002342">
    <property type="entry name" value="PRK01305.1-3"/>
    <property type="match status" value="1"/>
</dbReference>
<dbReference type="NCBIfam" id="NF002345">
    <property type="entry name" value="PRK01305.2-2"/>
    <property type="match status" value="1"/>
</dbReference>
<dbReference type="NCBIfam" id="NF002346">
    <property type="entry name" value="PRK01305.2-3"/>
    <property type="match status" value="1"/>
</dbReference>
<dbReference type="PANTHER" id="PTHR21367">
    <property type="entry name" value="ARGININE-TRNA-PROTEIN TRANSFERASE 1"/>
    <property type="match status" value="1"/>
</dbReference>
<dbReference type="PANTHER" id="PTHR21367:SF1">
    <property type="entry name" value="ARGINYL-TRNA--PROTEIN TRANSFERASE 1"/>
    <property type="match status" value="1"/>
</dbReference>
<dbReference type="Pfam" id="PF04377">
    <property type="entry name" value="ATE_C"/>
    <property type="match status" value="1"/>
</dbReference>
<dbReference type="Pfam" id="PF04376">
    <property type="entry name" value="ATE_N"/>
    <property type="match status" value="1"/>
</dbReference>
<dbReference type="PIRSF" id="PIRSF037208">
    <property type="entry name" value="ATE_pro_prd"/>
    <property type="match status" value="1"/>
</dbReference>
<dbReference type="SUPFAM" id="SSF55729">
    <property type="entry name" value="Acyl-CoA N-acyltransferases (Nat)"/>
    <property type="match status" value="1"/>
</dbReference>